<name>CCA_PARP8</name>
<reference key="1">
    <citation type="journal article" date="2014" name="Stand. Genomic Sci.">
        <title>Complete genome sequence of Burkholderia phymatum STM815(T), a broad host range and efficient nitrogen-fixing symbiont of Mimosa species.</title>
        <authorList>
            <person name="Moulin L."/>
            <person name="Klonowska A."/>
            <person name="Caroline B."/>
            <person name="Booth K."/>
            <person name="Vriezen J.A."/>
            <person name="Melkonian R."/>
            <person name="James E.K."/>
            <person name="Young J.P."/>
            <person name="Bena G."/>
            <person name="Hauser L."/>
            <person name="Land M."/>
            <person name="Kyrpides N."/>
            <person name="Bruce D."/>
            <person name="Chain P."/>
            <person name="Copeland A."/>
            <person name="Pitluck S."/>
            <person name="Woyke T."/>
            <person name="Lizotte-Waniewski M."/>
            <person name="Bristow J."/>
            <person name="Riley M."/>
        </authorList>
    </citation>
    <scope>NUCLEOTIDE SEQUENCE [LARGE SCALE GENOMIC DNA]</scope>
    <source>
        <strain>DSM 17167 / CIP 108236 / LMG 21445 / STM815</strain>
    </source>
</reference>
<sequence length="417" mass="46270">MNIYAVGGAIRDELLGMPVQDRDYVVVGATPEQMIAQGFRPVGKDFPVFLHPDTQEEYALARTERKTSAGYHGFQFFYAPDVTLEDDLARRDLTINAMAREVTPDGALIGPVIDPFNGREDLEHRVFRHVSDAFLEDPVRILRVARFSARFADFSVAPETLALMRKMVEAGEVDALVPERVWQEVSRGLMEKKPSRMFEVLRDCGALARVLPEIDALYGVPQRADYHPEVDTGVHVMMVVDHAAAQNYALAVRFAALTHDLGKATTPEDVLPRHIGHEGRSVDLLKPLCERLRVPNECRDLALLVAREHGNIHRVMETKAAGLVRLFERSDALRKPARFAEALQACEADARGRLGFEANAYPQAERLRQALVAARAVDAGAVAKSYENSPAEIKDAVHRERVRAVAKALNEAPSGQA</sequence>
<proteinExistence type="inferred from homology"/>
<protein>
    <recommendedName>
        <fullName evidence="1">Multifunctional CCA protein</fullName>
    </recommendedName>
    <domain>
        <recommendedName>
            <fullName evidence="1">CCA-adding enzyme</fullName>
            <ecNumber evidence="1">2.7.7.72</ecNumber>
        </recommendedName>
        <alternativeName>
            <fullName evidence="1">CCA tRNA nucleotidyltransferase</fullName>
        </alternativeName>
        <alternativeName>
            <fullName evidence="1">tRNA CCA-pyrophosphorylase</fullName>
        </alternativeName>
        <alternativeName>
            <fullName evidence="1">tRNA adenylyl-/cytidylyl-transferase</fullName>
        </alternativeName>
        <alternativeName>
            <fullName evidence="1">tRNA nucleotidyltransferase</fullName>
        </alternativeName>
        <alternativeName>
            <fullName evidence="1">tRNA-NT</fullName>
        </alternativeName>
    </domain>
    <domain>
        <recommendedName>
            <fullName evidence="1">2'-nucleotidase</fullName>
            <ecNumber evidence="1">3.1.3.-</ecNumber>
        </recommendedName>
    </domain>
    <domain>
        <recommendedName>
            <fullName evidence="1">2',3'-cyclic phosphodiesterase</fullName>
            <ecNumber evidence="1">3.1.4.-</ecNumber>
        </recommendedName>
    </domain>
    <domain>
        <recommendedName>
            <fullName evidence="1">Phosphatase</fullName>
            <ecNumber evidence="1">3.1.3.-</ecNumber>
        </recommendedName>
    </domain>
</protein>
<comment type="function">
    <text evidence="1">Catalyzes the addition and repair of the essential 3'-terminal CCA sequence in tRNAs without using a nucleic acid template. Adds these three nucleotides in the order of C, C, and A to the tRNA nucleotide-73, using CTP and ATP as substrates and producing inorganic pyrophosphate. tRNA 3'-terminal CCA addition is required both for tRNA processing and repair. Also involved in tRNA surveillance by mediating tandem CCA addition to generate a CCACCA at the 3' terminus of unstable tRNAs. While stable tRNAs receive only 3'-terminal CCA, unstable tRNAs are marked with CCACCA and rapidly degraded.</text>
</comment>
<comment type="catalytic activity">
    <reaction evidence="1">
        <text>a tRNA precursor + 2 CTP + ATP = a tRNA with a 3' CCA end + 3 diphosphate</text>
        <dbReference type="Rhea" id="RHEA:14433"/>
        <dbReference type="Rhea" id="RHEA-COMP:10465"/>
        <dbReference type="Rhea" id="RHEA-COMP:10468"/>
        <dbReference type="ChEBI" id="CHEBI:30616"/>
        <dbReference type="ChEBI" id="CHEBI:33019"/>
        <dbReference type="ChEBI" id="CHEBI:37563"/>
        <dbReference type="ChEBI" id="CHEBI:74896"/>
        <dbReference type="ChEBI" id="CHEBI:83071"/>
        <dbReference type="EC" id="2.7.7.72"/>
    </reaction>
</comment>
<comment type="catalytic activity">
    <reaction evidence="1">
        <text>a tRNA with a 3' CCA end + 2 CTP + ATP = a tRNA with a 3' CCACCA end + 3 diphosphate</text>
        <dbReference type="Rhea" id="RHEA:76235"/>
        <dbReference type="Rhea" id="RHEA-COMP:10468"/>
        <dbReference type="Rhea" id="RHEA-COMP:18655"/>
        <dbReference type="ChEBI" id="CHEBI:30616"/>
        <dbReference type="ChEBI" id="CHEBI:33019"/>
        <dbReference type="ChEBI" id="CHEBI:37563"/>
        <dbReference type="ChEBI" id="CHEBI:83071"/>
        <dbReference type="ChEBI" id="CHEBI:195187"/>
    </reaction>
    <physiologicalReaction direction="left-to-right" evidence="1">
        <dbReference type="Rhea" id="RHEA:76236"/>
    </physiologicalReaction>
</comment>
<comment type="cofactor">
    <cofactor evidence="1">
        <name>Mg(2+)</name>
        <dbReference type="ChEBI" id="CHEBI:18420"/>
    </cofactor>
    <text evidence="1">Magnesium is required for nucleotidyltransferase activity.</text>
</comment>
<comment type="cofactor">
    <cofactor evidence="1">
        <name>Ni(2+)</name>
        <dbReference type="ChEBI" id="CHEBI:49786"/>
    </cofactor>
    <text evidence="1">Nickel for phosphatase activity.</text>
</comment>
<comment type="subunit">
    <text evidence="1">Monomer. Can also form homodimers and oligomers.</text>
</comment>
<comment type="domain">
    <text evidence="1">Comprises two domains: an N-terminal domain containing the nucleotidyltransferase activity and a C-terminal HD domain associated with both phosphodiesterase and phosphatase activities.</text>
</comment>
<comment type="miscellaneous">
    <text evidence="1">A single active site specifically recognizes both ATP and CTP and is responsible for their addition.</text>
</comment>
<comment type="similarity">
    <text evidence="1">Belongs to the tRNA nucleotidyltransferase/poly(A) polymerase family. Bacterial CCA-adding enzyme type 1 subfamily.</text>
</comment>
<evidence type="ECO:0000255" key="1">
    <source>
        <dbReference type="HAMAP-Rule" id="MF_01261"/>
    </source>
</evidence>
<gene>
    <name evidence="1" type="primary">cca</name>
    <name type="ordered locus">Bphy_2897</name>
</gene>
<keyword id="KW-0067">ATP-binding</keyword>
<keyword id="KW-0378">Hydrolase</keyword>
<keyword id="KW-0460">Magnesium</keyword>
<keyword id="KW-0479">Metal-binding</keyword>
<keyword id="KW-0511">Multifunctional enzyme</keyword>
<keyword id="KW-0533">Nickel</keyword>
<keyword id="KW-0547">Nucleotide-binding</keyword>
<keyword id="KW-0548">Nucleotidyltransferase</keyword>
<keyword id="KW-1185">Reference proteome</keyword>
<keyword id="KW-0692">RNA repair</keyword>
<keyword id="KW-0694">RNA-binding</keyword>
<keyword id="KW-0808">Transferase</keyword>
<keyword id="KW-0819">tRNA processing</keyword>
<dbReference type="EC" id="2.7.7.72" evidence="1"/>
<dbReference type="EC" id="3.1.3.-" evidence="1"/>
<dbReference type="EC" id="3.1.4.-" evidence="1"/>
<dbReference type="EMBL" id="CP001043">
    <property type="protein sequence ID" value="ACC72069.1"/>
    <property type="molecule type" value="Genomic_DNA"/>
</dbReference>
<dbReference type="RefSeq" id="WP_012402248.1">
    <property type="nucleotide sequence ID" value="NC_010622.1"/>
</dbReference>
<dbReference type="SMR" id="B2JIM3"/>
<dbReference type="STRING" id="391038.Bphy_2897"/>
<dbReference type="KEGG" id="bph:Bphy_2897"/>
<dbReference type="eggNOG" id="COG0617">
    <property type="taxonomic scope" value="Bacteria"/>
</dbReference>
<dbReference type="HOGENOM" id="CLU_015961_1_1_4"/>
<dbReference type="OrthoDB" id="9805698at2"/>
<dbReference type="Proteomes" id="UP000001192">
    <property type="component" value="Chromosome 1"/>
</dbReference>
<dbReference type="GO" id="GO:0005524">
    <property type="term" value="F:ATP binding"/>
    <property type="evidence" value="ECO:0007669"/>
    <property type="project" value="UniProtKB-UniRule"/>
</dbReference>
<dbReference type="GO" id="GO:0004810">
    <property type="term" value="F:CCA tRNA nucleotidyltransferase activity"/>
    <property type="evidence" value="ECO:0007669"/>
    <property type="project" value="UniProtKB-UniRule"/>
</dbReference>
<dbReference type="GO" id="GO:0004112">
    <property type="term" value="F:cyclic-nucleotide phosphodiesterase activity"/>
    <property type="evidence" value="ECO:0007669"/>
    <property type="project" value="UniProtKB-UniRule"/>
</dbReference>
<dbReference type="GO" id="GO:0000287">
    <property type="term" value="F:magnesium ion binding"/>
    <property type="evidence" value="ECO:0007669"/>
    <property type="project" value="UniProtKB-UniRule"/>
</dbReference>
<dbReference type="GO" id="GO:0016791">
    <property type="term" value="F:phosphatase activity"/>
    <property type="evidence" value="ECO:0007669"/>
    <property type="project" value="UniProtKB-UniRule"/>
</dbReference>
<dbReference type="GO" id="GO:0000049">
    <property type="term" value="F:tRNA binding"/>
    <property type="evidence" value="ECO:0007669"/>
    <property type="project" value="UniProtKB-UniRule"/>
</dbReference>
<dbReference type="GO" id="GO:0042245">
    <property type="term" value="P:RNA repair"/>
    <property type="evidence" value="ECO:0007669"/>
    <property type="project" value="UniProtKB-KW"/>
</dbReference>
<dbReference type="GO" id="GO:0001680">
    <property type="term" value="P:tRNA 3'-terminal CCA addition"/>
    <property type="evidence" value="ECO:0007669"/>
    <property type="project" value="UniProtKB-UniRule"/>
</dbReference>
<dbReference type="CDD" id="cd00077">
    <property type="entry name" value="HDc"/>
    <property type="match status" value="1"/>
</dbReference>
<dbReference type="CDD" id="cd05398">
    <property type="entry name" value="NT_ClassII-CCAase"/>
    <property type="match status" value="1"/>
</dbReference>
<dbReference type="Gene3D" id="3.30.460.10">
    <property type="entry name" value="Beta Polymerase, domain 2"/>
    <property type="match status" value="1"/>
</dbReference>
<dbReference type="Gene3D" id="1.10.3090.10">
    <property type="entry name" value="cca-adding enzyme, domain 2"/>
    <property type="match status" value="1"/>
</dbReference>
<dbReference type="HAMAP" id="MF_01261">
    <property type="entry name" value="CCA_bact_type1"/>
    <property type="match status" value="1"/>
</dbReference>
<dbReference type="HAMAP" id="MF_01262">
    <property type="entry name" value="CCA_bact_type2"/>
    <property type="match status" value="1"/>
</dbReference>
<dbReference type="InterPro" id="IPR012006">
    <property type="entry name" value="CCA_bact"/>
</dbReference>
<dbReference type="InterPro" id="IPR003607">
    <property type="entry name" value="HD/PDEase_dom"/>
</dbReference>
<dbReference type="InterPro" id="IPR006674">
    <property type="entry name" value="HD_domain"/>
</dbReference>
<dbReference type="InterPro" id="IPR043519">
    <property type="entry name" value="NT_sf"/>
</dbReference>
<dbReference type="InterPro" id="IPR002646">
    <property type="entry name" value="PolA_pol_head_dom"/>
</dbReference>
<dbReference type="InterPro" id="IPR032828">
    <property type="entry name" value="PolyA_RNA-bd"/>
</dbReference>
<dbReference type="InterPro" id="IPR050124">
    <property type="entry name" value="tRNA_CCA-adding_enzyme"/>
</dbReference>
<dbReference type="NCBIfam" id="NF008137">
    <property type="entry name" value="PRK10885.1"/>
    <property type="match status" value="1"/>
</dbReference>
<dbReference type="PANTHER" id="PTHR47545">
    <property type="entry name" value="MULTIFUNCTIONAL CCA PROTEIN"/>
    <property type="match status" value="1"/>
</dbReference>
<dbReference type="PANTHER" id="PTHR47545:SF1">
    <property type="entry name" value="MULTIFUNCTIONAL CCA PROTEIN"/>
    <property type="match status" value="1"/>
</dbReference>
<dbReference type="Pfam" id="PF01966">
    <property type="entry name" value="HD"/>
    <property type="match status" value="1"/>
</dbReference>
<dbReference type="Pfam" id="PF01743">
    <property type="entry name" value="PolyA_pol"/>
    <property type="match status" value="1"/>
</dbReference>
<dbReference type="Pfam" id="PF12627">
    <property type="entry name" value="PolyA_pol_RNAbd"/>
    <property type="match status" value="1"/>
</dbReference>
<dbReference type="PIRSF" id="PIRSF000813">
    <property type="entry name" value="CCA_bact"/>
    <property type="match status" value="1"/>
</dbReference>
<dbReference type="SUPFAM" id="SSF81301">
    <property type="entry name" value="Nucleotidyltransferase"/>
    <property type="match status" value="1"/>
</dbReference>
<dbReference type="SUPFAM" id="SSF81891">
    <property type="entry name" value="Poly A polymerase C-terminal region-like"/>
    <property type="match status" value="1"/>
</dbReference>
<dbReference type="PROSITE" id="PS51831">
    <property type="entry name" value="HD"/>
    <property type="match status" value="1"/>
</dbReference>
<organism>
    <name type="scientific">Paraburkholderia phymatum (strain DSM 17167 / CIP 108236 / LMG 21445 / STM815)</name>
    <name type="common">Burkholderia phymatum</name>
    <dbReference type="NCBI Taxonomy" id="391038"/>
    <lineage>
        <taxon>Bacteria</taxon>
        <taxon>Pseudomonadati</taxon>
        <taxon>Pseudomonadota</taxon>
        <taxon>Betaproteobacteria</taxon>
        <taxon>Burkholderiales</taxon>
        <taxon>Burkholderiaceae</taxon>
        <taxon>Paraburkholderia</taxon>
    </lineage>
</organism>
<feature type="chain" id="PRO_1000140027" description="Multifunctional CCA protein">
    <location>
        <begin position="1"/>
        <end position="417"/>
    </location>
</feature>
<feature type="domain" description="HD" evidence="1">
    <location>
        <begin position="232"/>
        <end position="333"/>
    </location>
</feature>
<feature type="binding site" evidence="1">
    <location>
        <position position="8"/>
    </location>
    <ligand>
        <name>ATP</name>
        <dbReference type="ChEBI" id="CHEBI:30616"/>
    </ligand>
</feature>
<feature type="binding site" evidence="1">
    <location>
        <position position="8"/>
    </location>
    <ligand>
        <name>CTP</name>
        <dbReference type="ChEBI" id="CHEBI:37563"/>
    </ligand>
</feature>
<feature type="binding site" evidence="1">
    <location>
        <position position="11"/>
    </location>
    <ligand>
        <name>ATP</name>
        <dbReference type="ChEBI" id="CHEBI:30616"/>
    </ligand>
</feature>
<feature type="binding site" evidence="1">
    <location>
        <position position="11"/>
    </location>
    <ligand>
        <name>CTP</name>
        <dbReference type="ChEBI" id="CHEBI:37563"/>
    </ligand>
</feature>
<feature type="binding site" evidence="1">
    <location>
        <position position="21"/>
    </location>
    <ligand>
        <name>Mg(2+)</name>
        <dbReference type="ChEBI" id="CHEBI:18420"/>
    </ligand>
</feature>
<feature type="binding site" evidence="1">
    <location>
        <position position="23"/>
    </location>
    <ligand>
        <name>Mg(2+)</name>
        <dbReference type="ChEBI" id="CHEBI:18420"/>
    </ligand>
</feature>
<feature type="binding site" evidence="1">
    <location>
        <position position="91"/>
    </location>
    <ligand>
        <name>ATP</name>
        <dbReference type="ChEBI" id="CHEBI:30616"/>
    </ligand>
</feature>
<feature type="binding site" evidence="1">
    <location>
        <position position="91"/>
    </location>
    <ligand>
        <name>CTP</name>
        <dbReference type="ChEBI" id="CHEBI:37563"/>
    </ligand>
</feature>
<feature type="binding site" evidence="1">
    <location>
        <position position="143"/>
    </location>
    <ligand>
        <name>ATP</name>
        <dbReference type="ChEBI" id="CHEBI:30616"/>
    </ligand>
</feature>
<feature type="binding site" evidence="1">
    <location>
        <position position="143"/>
    </location>
    <ligand>
        <name>CTP</name>
        <dbReference type="ChEBI" id="CHEBI:37563"/>
    </ligand>
</feature>
<feature type="binding site" evidence="1">
    <location>
        <position position="146"/>
    </location>
    <ligand>
        <name>ATP</name>
        <dbReference type="ChEBI" id="CHEBI:30616"/>
    </ligand>
</feature>
<feature type="binding site" evidence="1">
    <location>
        <position position="146"/>
    </location>
    <ligand>
        <name>CTP</name>
        <dbReference type="ChEBI" id="CHEBI:37563"/>
    </ligand>
</feature>
<accession>B2JIM3</accession>